<dbReference type="EC" id="2.7.7.8" evidence="1"/>
<dbReference type="EMBL" id="BA000022">
    <property type="protein sequence ID" value="BAA16661.1"/>
    <property type="molecule type" value="Genomic_DNA"/>
</dbReference>
<dbReference type="PIR" id="S74509">
    <property type="entry name" value="S74509"/>
</dbReference>
<dbReference type="SMR" id="P72659"/>
<dbReference type="FunCoup" id="P72659">
    <property type="interactions" value="494"/>
</dbReference>
<dbReference type="IntAct" id="P72659">
    <property type="interactions" value="3"/>
</dbReference>
<dbReference type="STRING" id="1148.gene:10497516"/>
<dbReference type="PaxDb" id="1148-1651733"/>
<dbReference type="EnsemblBacteria" id="BAA16661">
    <property type="protein sequence ID" value="BAA16661"/>
    <property type="gene ID" value="BAA16661"/>
</dbReference>
<dbReference type="KEGG" id="syn:sll1043"/>
<dbReference type="eggNOG" id="COG1185">
    <property type="taxonomic scope" value="Bacteria"/>
</dbReference>
<dbReference type="InParanoid" id="P72659"/>
<dbReference type="PhylomeDB" id="P72659"/>
<dbReference type="BRENDA" id="2.7.7.8">
    <property type="organism ID" value="382"/>
</dbReference>
<dbReference type="Proteomes" id="UP000001425">
    <property type="component" value="Chromosome"/>
</dbReference>
<dbReference type="GO" id="GO:0005829">
    <property type="term" value="C:cytosol"/>
    <property type="evidence" value="ECO:0000318"/>
    <property type="project" value="GO_Central"/>
</dbReference>
<dbReference type="GO" id="GO:0000175">
    <property type="term" value="F:3'-5'-RNA exonuclease activity"/>
    <property type="evidence" value="ECO:0000318"/>
    <property type="project" value="GO_Central"/>
</dbReference>
<dbReference type="GO" id="GO:0000287">
    <property type="term" value="F:magnesium ion binding"/>
    <property type="evidence" value="ECO:0007669"/>
    <property type="project" value="UniProtKB-UniRule"/>
</dbReference>
<dbReference type="GO" id="GO:0004654">
    <property type="term" value="F:polyribonucleotide nucleotidyltransferase activity"/>
    <property type="evidence" value="ECO:0000318"/>
    <property type="project" value="GO_Central"/>
</dbReference>
<dbReference type="GO" id="GO:0003723">
    <property type="term" value="F:RNA binding"/>
    <property type="evidence" value="ECO:0007669"/>
    <property type="project" value="UniProtKB-UniRule"/>
</dbReference>
<dbReference type="GO" id="GO:0006402">
    <property type="term" value="P:mRNA catabolic process"/>
    <property type="evidence" value="ECO:0007669"/>
    <property type="project" value="UniProtKB-UniRule"/>
</dbReference>
<dbReference type="GO" id="GO:0006401">
    <property type="term" value="P:RNA catabolic process"/>
    <property type="evidence" value="ECO:0000318"/>
    <property type="project" value="GO_Central"/>
</dbReference>
<dbReference type="GO" id="GO:0006396">
    <property type="term" value="P:RNA processing"/>
    <property type="evidence" value="ECO:0007669"/>
    <property type="project" value="InterPro"/>
</dbReference>
<dbReference type="CDD" id="cd02393">
    <property type="entry name" value="KH-I_PNPase"/>
    <property type="match status" value="1"/>
</dbReference>
<dbReference type="CDD" id="cd11363">
    <property type="entry name" value="RNase_PH_PNPase_1"/>
    <property type="match status" value="1"/>
</dbReference>
<dbReference type="CDD" id="cd11364">
    <property type="entry name" value="RNase_PH_PNPase_2"/>
    <property type="match status" value="1"/>
</dbReference>
<dbReference type="CDD" id="cd04472">
    <property type="entry name" value="S1_PNPase"/>
    <property type="match status" value="1"/>
</dbReference>
<dbReference type="FunFam" id="3.30.1370.10:FF:000001">
    <property type="entry name" value="Polyribonucleotide nucleotidyltransferase"/>
    <property type="match status" value="1"/>
</dbReference>
<dbReference type="FunFam" id="3.30.230.70:FF:000001">
    <property type="entry name" value="Polyribonucleotide nucleotidyltransferase"/>
    <property type="match status" value="1"/>
</dbReference>
<dbReference type="FunFam" id="3.30.230.70:FF:000002">
    <property type="entry name" value="Polyribonucleotide nucleotidyltransferase"/>
    <property type="match status" value="1"/>
</dbReference>
<dbReference type="Gene3D" id="3.30.230.70">
    <property type="entry name" value="GHMP Kinase, N-terminal domain"/>
    <property type="match status" value="2"/>
</dbReference>
<dbReference type="Gene3D" id="3.30.1370.10">
    <property type="entry name" value="K Homology domain, type 1"/>
    <property type="match status" value="1"/>
</dbReference>
<dbReference type="Gene3D" id="2.40.50.140">
    <property type="entry name" value="Nucleic acid-binding proteins"/>
    <property type="match status" value="1"/>
</dbReference>
<dbReference type="HAMAP" id="MF_01595">
    <property type="entry name" value="PNPase"/>
    <property type="match status" value="1"/>
</dbReference>
<dbReference type="InterPro" id="IPR001247">
    <property type="entry name" value="ExoRNase_PH_dom1"/>
</dbReference>
<dbReference type="InterPro" id="IPR015847">
    <property type="entry name" value="ExoRNase_PH_dom2"/>
</dbReference>
<dbReference type="InterPro" id="IPR036345">
    <property type="entry name" value="ExoRNase_PH_dom2_sf"/>
</dbReference>
<dbReference type="InterPro" id="IPR004087">
    <property type="entry name" value="KH_dom"/>
</dbReference>
<dbReference type="InterPro" id="IPR004088">
    <property type="entry name" value="KH_dom_type_1"/>
</dbReference>
<dbReference type="InterPro" id="IPR036612">
    <property type="entry name" value="KH_dom_type_1_sf"/>
</dbReference>
<dbReference type="InterPro" id="IPR012340">
    <property type="entry name" value="NA-bd_OB-fold"/>
</dbReference>
<dbReference type="InterPro" id="IPR012162">
    <property type="entry name" value="PNPase"/>
</dbReference>
<dbReference type="InterPro" id="IPR027408">
    <property type="entry name" value="PNPase/RNase_PH_dom_sf"/>
</dbReference>
<dbReference type="InterPro" id="IPR015848">
    <property type="entry name" value="PNPase_PH_RNA-bd_bac/org-type"/>
</dbReference>
<dbReference type="InterPro" id="IPR020568">
    <property type="entry name" value="Ribosomal_Su5_D2-typ_SF"/>
</dbReference>
<dbReference type="InterPro" id="IPR003029">
    <property type="entry name" value="S1_domain"/>
</dbReference>
<dbReference type="NCBIfam" id="TIGR03591">
    <property type="entry name" value="polynuc_phos"/>
    <property type="match status" value="1"/>
</dbReference>
<dbReference type="NCBIfam" id="NF008805">
    <property type="entry name" value="PRK11824.1"/>
    <property type="match status" value="1"/>
</dbReference>
<dbReference type="PANTHER" id="PTHR11252">
    <property type="entry name" value="POLYRIBONUCLEOTIDE NUCLEOTIDYLTRANSFERASE"/>
    <property type="match status" value="1"/>
</dbReference>
<dbReference type="PANTHER" id="PTHR11252:SF0">
    <property type="entry name" value="POLYRIBONUCLEOTIDE NUCLEOTIDYLTRANSFERASE 1, MITOCHONDRIAL"/>
    <property type="match status" value="1"/>
</dbReference>
<dbReference type="Pfam" id="PF00013">
    <property type="entry name" value="KH_1"/>
    <property type="match status" value="1"/>
</dbReference>
<dbReference type="Pfam" id="PF03726">
    <property type="entry name" value="PNPase"/>
    <property type="match status" value="1"/>
</dbReference>
<dbReference type="Pfam" id="PF01138">
    <property type="entry name" value="RNase_PH"/>
    <property type="match status" value="2"/>
</dbReference>
<dbReference type="Pfam" id="PF03725">
    <property type="entry name" value="RNase_PH_C"/>
    <property type="match status" value="2"/>
</dbReference>
<dbReference type="Pfam" id="PF00575">
    <property type="entry name" value="S1"/>
    <property type="match status" value="1"/>
</dbReference>
<dbReference type="PIRSF" id="PIRSF005499">
    <property type="entry name" value="PNPase"/>
    <property type="match status" value="1"/>
</dbReference>
<dbReference type="SMART" id="SM00322">
    <property type="entry name" value="KH"/>
    <property type="match status" value="1"/>
</dbReference>
<dbReference type="SMART" id="SM00316">
    <property type="entry name" value="S1"/>
    <property type="match status" value="1"/>
</dbReference>
<dbReference type="SUPFAM" id="SSF54791">
    <property type="entry name" value="Eukaryotic type KH-domain (KH-domain type I)"/>
    <property type="match status" value="1"/>
</dbReference>
<dbReference type="SUPFAM" id="SSF50249">
    <property type="entry name" value="Nucleic acid-binding proteins"/>
    <property type="match status" value="1"/>
</dbReference>
<dbReference type="SUPFAM" id="SSF55666">
    <property type="entry name" value="Ribonuclease PH domain 2-like"/>
    <property type="match status" value="2"/>
</dbReference>
<dbReference type="SUPFAM" id="SSF54211">
    <property type="entry name" value="Ribosomal protein S5 domain 2-like"/>
    <property type="match status" value="2"/>
</dbReference>
<dbReference type="PROSITE" id="PS50084">
    <property type="entry name" value="KH_TYPE_1"/>
    <property type="match status" value="1"/>
</dbReference>
<dbReference type="PROSITE" id="PS50126">
    <property type="entry name" value="S1"/>
    <property type="match status" value="1"/>
</dbReference>
<feature type="chain" id="PRO_0000329905" description="Polyribonucleotide nucleotidyltransferase">
    <location>
        <begin position="1"/>
        <end position="718"/>
    </location>
</feature>
<feature type="domain" description="KH" evidence="1">
    <location>
        <begin position="564"/>
        <end position="623"/>
    </location>
</feature>
<feature type="domain" description="S1 motif" evidence="1">
    <location>
        <begin position="633"/>
        <end position="701"/>
    </location>
</feature>
<feature type="binding site" evidence="1">
    <location>
        <position position="497"/>
    </location>
    <ligand>
        <name>Mg(2+)</name>
        <dbReference type="ChEBI" id="CHEBI:18420"/>
    </ligand>
</feature>
<feature type="binding site" evidence="1">
    <location>
        <position position="503"/>
    </location>
    <ligand>
        <name>Mg(2+)</name>
        <dbReference type="ChEBI" id="CHEBI:18420"/>
    </ligand>
</feature>
<name>PNP_SYNY3</name>
<accession>P72659</accession>
<organism>
    <name type="scientific">Synechocystis sp. (strain ATCC 27184 / PCC 6803 / Kazusa)</name>
    <dbReference type="NCBI Taxonomy" id="1111708"/>
    <lineage>
        <taxon>Bacteria</taxon>
        <taxon>Bacillati</taxon>
        <taxon>Cyanobacteriota</taxon>
        <taxon>Cyanophyceae</taxon>
        <taxon>Synechococcales</taxon>
        <taxon>Merismopediaceae</taxon>
        <taxon>Synechocystis</taxon>
    </lineage>
</organism>
<sequence>MQEFDKSISFDGRDIRLKMGTLAPQAGGSVLIQSGDTAVLVTATRAKGRDGIDFLPLTVDYEGRLYAAGRIPGGFLRREGRPPEKATLISRLIDRPLRPLFPHWLRDELQIVATTLSMDEEVPPDVLAVTGASVAVILAQIPFKGPMAAVRVGLVGDDFIINPTYREVHNGDLDLVVAGTPAGIVMVEAGANQLPEQDIIEAIDFGYEAVQDLINAQRELMTDLGITLATSEPPPVNTAVEEFIANRASKKIITVLGQFDLGKDGRDAALDEIKATEVETAIAELPETDPVKQSVEEDPKLVGNLYKALTKKLMRKQIVDDGVRVDGRKLEQVRPISCEVGFLPRRVHGSGLFNRGLTQVLSLATLGSPGDAQDLADDLHPEDEKRYLHHYNFPPYSVGEARPMRSPGRREIGHGALAERAIIPVLPPQEDFPYVVRVVSEVLSSNGSTSMGSVCGSTLALMDAGVPIKKPVSGAAMGLIKEGDEIRILTDIQGIEDFLGDMDFKVAGTDSGITALQMDMKIDGLSMEVVSKAIMQALPARLHILDKMLATIREPRPELSPFAPRLLTLKIEPEHIGMVIGPGGKTIKGITEQTSCKIDIADDGTVTIASSEGERAERARQMIYNMTRKLNEGEVYLGRVTRIIPIGAFVEVLPGKEGMIHISQLTEGRVGKVEDEVGVGDEVIVKVREIDSKGRLNLTRLGIHPDEAAEARRNASRG</sequence>
<keyword id="KW-0963">Cytoplasm</keyword>
<keyword id="KW-0460">Magnesium</keyword>
<keyword id="KW-0479">Metal-binding</keyword>
<keyword id="KW-0548">Nucleotidyltransferase</keyword>
<keyword id="KW-1185">Reference proteome</keyword>
<keyword id="KW-0694">RNA-binding</keyword>
<keyword id="KW-0808">Transferase</keyword>
<evidence type="ECO:0000255" key="1">
    <source>
        <dbReference type="HAMAP-Rule" id="MF_01595"/>
    </source>
</evidence>
<evidence type="ECO:0000269" key="2">
    <source>
    </source>
</evidence>
<evidence type="ECO:0000269" key="3">
    <source>
    </source>
</evidence>
<evidence type="ECO:0000269" key="4">
    <source>
    </source>
</evidence>
<protein>
    <recommendedName>
        <fullName evidence="1">Polyribonucleotide nucleotidyltransferase</fullName>
        <ecNumber evidence="1">2.7.7.8</ecNumber>
    </recommendedName>
    <alternativeName>
        <fullName evidence="1">Polynucleotide phosphorylase</fullName>
        <shortName evidence="1">PNPase</shortName>
    </alternativeName>
</protein>
<reference key="1">
    <citation type="journal article" date="1996" name="DNA Res.">
        <title>Sequence analysis of the genome of the unicellular cyanobacterium Synechocystis sp. strain PCC6803. II. Sequence determination of the entire genome and assignment of potential protein-coding regions.</title>
        <authorList>
            <person name="Kaneko T."/>
            <person name="Sato S."/>
            <person name="Kotani H."/>
            <person name="Tanaka A."/>
            <person name="Asamizu E."/>
            <person name="Nakamura Y."/>
            <person name="Miyajima N."/>
            <person name="Hirosawa M."/>
            <person name="Sugiura M."/>
            <person name="Sasamoto S."/>
            <person name="Kimura T."/>
            <person name="Hosouchi T."/>
            <person name="Matsuno A."/>
            <person name="Muraki A."/>
            <person name="Nakazaki N."/>
            <person name="Naruo K."/>
            <person name="Okumura S."/>
            <person name="Shimpo S."/>
            <person name="Takeuchi C."/>
            <person name="Wada T."/>
            <person name="Watanabe A."/>
            <person name="Yamada M."/>
            <person name="Yasuda M."/>
            <person name="Tabata S."/>
        </authorList>
    </citation>
    <scope>NUCLEOTIDE SEQUENCE [LARGE SCALE GENOMIC DNA]</scope>
    <source>
        <strain>ATCC 27184 / PCC 6803 / Kazusa</strain>
    </source>
</reference>
<reference key="2">
    <citation type="journal article" date="2003" name="J. Biol. Chem.">
        <title>RNA polyadenylation and degradation in cyanobacteria are similar to the chloroplast but different from Escherichia coli.</title>
        <authorList>
            <person name="Rott R."/>
            <person name="Zipor G."/>
            <person name="Portnoy V."/>
            <person name="Liveanu V."/>
            <person name="Schuster G."/>
        </authorList>
    </citation>
    <scope>DISRUPTION PHENOTYPE</scope>
    <source>
        <strain>ATCC 27184 / PCC 6803 / Kazusa</strain>
    </source>
</reference>
<reference key="3">
    <citation type="journal article" date="2014" name="RNA">
        <title>RNase E forms a complex with polynucleotide phosphorylase in cyanobacteria via a cyanobacterial-specific nonapeptide in the noncatalytic region.</title>
        <authorList>
            <person name="Zhang J.Y."/>
            <person name="Deng X.M."/>
            <person name="Li F.P."/>
            <person name="Wang L."/>
            <person name="Huang Q.Y."/>
            <person name="Zhang C.C."/>
            <person name="Chen W.L."/>
        </authorList>
    </citation>
    <scope>SUBUNIT</scope>
    <source>
        <strain>ATCC 27184 / PCC 6803 / Kazusa</strain>
    </source>
</reference>
<reference key="4">
    <citation type="journal article" date="2016" name="J. Bacteriol.">
        <title>Cyanobacterial RNA Helicase CrhR Localizes to the Thylakoid Membrane Region and Cosediments with Degradosome and Polysome Complexes in Synechocystis sp. Strain PCC 6803.</title>
        <authorList>
            <person name="Rosana A.R."/>
            <person name="Whitford D.S."/>
            <person name="Fahlman R.P."/>
            <person name="Owttrim G.W."/>
        </authorList>
    </citation>
    <scope>SUBCELLULAR LOCATION</scope>
    <source>
        <strain>ATCC 27184 / PCC 6803 / Kazusa</strain>
    </source>
</reference>
<gene>
    <name evidence="1" type="primary">pnp</name>
    <name type="ordered locus">sll1043</name>
</gene>
<comment type="function">
    <text evidence="1">Involved in mRNA degradation. Catalyzes the phosphorolysis of single-stranded polyribonucleotides processively in the 3'- to 5'-direction.</text>
</comment>
<comment type="catalytic activity">
    <reaction evidence="1">
        <text>RNA(n+1) + phosphate = RNA(n) + a ribonucleoside 5'-diphosphate</text>
        <dbReference type="Rhea" id="RHEA:22096"/>
        <dbReference type="Rhea" id="RHEA-COMP:14527"/>
        <dbReference type="Rhea" id="RHEA-COMP:17342"/>
        <dbReference type="ChEBI" id="CHEBI:43474"/>
        <dbReference type="ChEBI" id="CHEBI:57930"/>
        <dbReference type="ChEBI" id="CHEBI:140395"/>
        <dbReference type="EC" id="2.7.7.8"/>
    </reaction>
</comment>
<comment type="cofactor">
    <cofactor evidence="1">
        <name>Mg(2+)</name>
        <dbReference type="ChEBI" id="CHEBI:18420"/>
    </cofactor>
</comment>
<comment type="subunit">
    <text evidence="3">Interacts with RNase E (rne).</text>
</comment>
<comment type="subcellular location">
    <subcellularLocation>
        <location evidence="1">Cytoplasm</location>
    </subcellularLocation>
    <text evidence="4">Some of the protein cosediments with polysomes.</text>
</comment>
<comment type="disruption phenotype">
    <text evidence="2">Essential, it cannot be deleted.</text>
</comment>
<comment type="similarity">
    <text evidence="1">Belongs to the polyribonucleotide nucleotidyltransferase family.</text>
</comment>
<proteinExistence type="evidence at protein level"/>